<evidence type="ECO:0000250" key="1"/>
<evidence type="ECO:0000250" key="2">
    <source>
        <dbReference type="UniProtKB" id="P35408"/>
    </source>
</evidence>
<evidence type="ECO:0000255" key="3"/>
<evidence type="ECO:0000255" key="4">
    <source>
        <dbReference type="PROSITE-ProRule" id="PRU00521"/>
    </source>
</evidence>
<evidence type="ECO:0000256" key="5">
    <source>
        <dbReference type="SAM" id="MobiDB-lite"/>
    </source>
</evidence>
<evidence type="ECO:0000305" key="6"/>
<protein>
    <recommendedName>
        <fullName>Prostaglandin E2 receptor EP4 subtype</fullName>
        <shortName>PGE receptor EP4 subtype</shortName>
        <shortName>PGE2 receptor EP4 subtype</shortName>
    </recommendedName>
    <alternativeName>
        <fullName>Prostanoid EP4 receptor</fullName>
    </alternativeName>
</protein>
<accession>P43114</accession>
<accession>O08728</accession>
<keyword id="KW-1003">Cell membrane</keyword>
<keyword id="KW-1015">Disulfide bond</keyword>
<keyword id="KW-0297">G-protein coupled receptor</keyword>
<keyword id="KW-0325">Glycoprotein</keyword>
<keyword id="KW-0472">Membrane</keyword>
<keyword id="KW-0597">Phosphoprotein</keyword>
<keyword id="KW-0675">Receptor</keyword>
<keyword id="KW-1185">Reference proteome</keyword>
<keyword id="KW-0807">Transducer</keyword>
<keyword id="KW-0812">Transmembrane</keyword>
<keyword id="KW-1133">Transmembrane helix</keyword>
<comment type="function">
    <text>Receptor for prostaglandin E2 (PGE2). The activity of this receptor is mediated by G(s) proteins that stimulate adenylate cyclase. Has a relaxing effect on smooth muscle. May play an important role in regulating renal hemodynamics, intestinal epithelial transport, adrenal aldosterone secretion, and uterine function.</text>
</comment>
<comment type="subunit">
    <text evidence="2">Interacts with FEM1A.</text>
</comment>
<comment type="subcellular location">
    <subcellularLocation>
        <location>Cell membrane</location>
        <topology>Multi-pass membrane protein</topology>
    </subcellularLocation>
</comment>
<comment type="PTM">
    <text evidence="1">Phosphorylation mediates agonist-mediated desensitization by promoting cytoplasmic retention.</text>
</comment>
<comment type="similarity">
    <text evidence="4">Belongs to the G-protein coupled receptor 1 family.</text>
</comment>
<comment type="caution">
    <text evidence="6">Was originally designated as the EP2 subtype.</text>
</comment>
<dbReference type="EMBL" id="D28860">
    <property type="protein sequence ID" value="BAA06011.1"/>
    <property type="molecule type" value="mRNA"/>
</dbReference>
<dbReference type="EMBL" id="U94709">
    <property type="protein sequence ID" value="AAB53326.1"/>
    <property type="molecule type" value="mRNA"/>
</dbReference>
<dbReference type="PIR" id="JC2241">
    <property type="entry name" value="JC2241"/>
</dbReference>
<dbReference type="RefSeq" id="NP_114465.3">
    <property type="nucleotide sequence ID" value="NM_032076.3"/>
</dbReference>
<dbReference type="RefSeq" id="XP_006232058.1">
    <property type="nucleotide sequence ID" value="XM_006231996.3"/>
</dbReference>
<dbReference type="SMR" id="P43114"/>
<dbReference type="FunCoup" id="P43114">
    <property type="interactions" value="569"/>
</dbReference>
<dbReference type="STRING" id="10116.ENSRNOP00000017886"/>
<dbReference type="BindingDB" id="P43114"/>
<dbReference type="ChEMBL" id="CHEMBL4086"/>
<dbReference type="DrugCentral" id="P43114"/>
<dbReference type="GuidetoPHARMACOLOGY" id="343"/>
<dbReference type="GlyCosmos" id="P43114">
    <property type="glycosylation" value="1 site, No reported glycans"/>
</dbReference>
<dbReference type="GlyGen" id="P43114">
    <property type="glycosylation" value="1 site"/>
</dbReference>
<dbReference type="PhosphoSitePlus" id="P43114"/>
<dbReference type="PaxDb" id="10116-ENSRNOP00000017886"/>
<dbReference type="GeneID" id="84023"/>
<dbReference type="KEGG" id="rno:84023"/>
<dbReference type="AGR" id="RGD:628641"/>
<dbReference type="CTD" id="5734"/>
<dbReference type="RGD" id="628641">
    <property type="gene designation" value="Ptger4"/>
</dbReference>
<dbReference type="eggNOG" id="KOG3656">
    <property type="taxonomic scope" value="Eukaryota"/>
</dbReference>
<dbReference type="InParanoid" id="P43114"/>
<dbReference type="OrthoDB" id="5959154at2759"/>
<dbReference type="PhylomeDB" id="P43114"/>
<dbReference type="TreeFam" id="TF324982"/>
<dbReference type="Reactome" id="R-RNO-391908">
    <property type="pathway name" value="Prostanoid ligand receptors"/>
</dbReference>
<dbReference type="PRO" id="PR:P43114"/>
<dbReference type="Proteomes" id="UP000002494">
    <property type="component" value="Unplaced"/>
</dbReference>
<dbReference type="GO" id="GO:0044306">
    <property type="term" value="C:neuron projection terminus"/>
    <property type="evidence" value="ECO:0000314"/>
    <property type="project" value="RGD"/>
</dbReference>
<dbReference type="GO" id="GO:0043025">
    <property type="term" value="C:neuronal cell body"/>
    <property type="evidence" value="ECO:0000314"/>
    <property type="project" value="RGD"/>
</dbReference>
<dbReference type="GO" id="GO:0031965">
    <property type="term" value="C:nuclear membrane"/>
    <property type="evidence" value="ECO:0000314"/>
    <property type="project" value="RGD"/>
</dbReference>
<dbReference type="GO" id="GO:0005886">
    <property type="term" value="C:plasma membrane"/>
    <property type="evidence" value="ECO:0000266"/>
    <property type="project" value="RGD"/>
</dbReference>
<dbReference type="GO" id="GO:0004957">
    <property type="term" value="F:prostaglandin E receptor activity"/>
    <property type="evidence" value="ECO:0000314"/>
    <property type="project" value="RGD"/>
</dbReference>
<dbReference type="GO" id="GO:0007189">
    <property type="term" value="P:adenylate cyclase-activating G protein-coupled receptor signaling pathway"/>
    <property type="evidence" value="ECO:0000266"/>
    <property type="project" value="RGD"/>
</dbReference>
<dbReference type="GO" id="GO:0007193">
    <property type="term" value="P:adenylate cyclase-inhibiting G protein-coupled receptor signaling pathway"/>
    <property type="evidence" value="ECO:0000266"/>
    <property type="project" value="RGD"/>
</dbReference>
<dbReference type="GO" id="GO:0007188">
    <property type="term" value="P:adenylate cyclase-modulating G protein-coupled receptor signaling pathway"/>
    <property type="evidence" value="ECO:0000250"/>
    <property type="project" value="UniProtKB"/>
</dbReference>
<dbReference type="GO" id="GO:0060348">
    <property type="term" value="P:bone development"/>
    <property type="evidence" value="ECO:0000314"/>
    <property type="project" value="UniProtKB"/>
</dbReference>
<dbReference type="GO" id="GO:0006171">
    <property type="term" value="P:cAMP biosynthetic process"/>
    <property type="evidence" value="ECO:0000315"/>
    <property type="project" value="RGD"/>
</dbReference>
<dbReference type="GO" id="GO:0141156">
    <property type="term" value="P:cAMP/PKA signal transduction"/>
    <property type="evidence" value="ECO:0000315"/>
    <property type="project" value="RGD"/>
</dbReference>
<dbReference type="GO" id="GO:0071333">
    <property type="term" value="P:cellular response to glucose stimulus"/>
    <property type="evidence" value="ECO:0000270"/>
    <property type="project" value="RGD"/>
</dbReference>
<dbReference type="GO" id="GO:0071347">
    <property type="term" value="P:cellular response to interleukin-1"/>
    <property type="evidence" value="ECO:0000270"/>
    <property type="project" value="RGD"/>
</dbReference>
<dbReference type="GO" id="GO:0071260">
    <property type="term" value="P:cellular response to mechanical stimulus"/>
    <property type="evidence" value="ECO:0000250"/>
    <property type="project" value="UniProtKB"/>
</dbReference>
<dbReference type="GO" id="GO:0071380">
    <property type="term" value="P:cellular response to prostaglandin E stimulus"/>
    <property type="evidence" value="ECO:0000315"/>
    <property type="project" value="RGD"/>
</dbReference>
<dbReference type="GO" id="GO:0042466">
    <property type="term" value="P:chemokinesis"/>
    <property type="evidence" value="ECO:0000315"/>
    <property type="project" value="RGD"/>
</dbReference>
<dbReference type="GO" id="GO:0097070">
    <property type="term" value="P:ductus arteriosus closure"/>
    <property type="evidence" value="ECO:0000315"/>
    <property type="project" value="RGD"/>
</dbReference>
<dbReference type="GO" id="GO:0070371">
    <property type="term" value="P:ERK1 and ERK2 cascade"/>
    <property type="evidence" value="ECO:0000314"/>
    <property type="project" value="UniProtKB"/>
</dbReference>
<dbReference type="GO" id="GO:0007565">
    <property type="term" value="P:female pregnancy"/>
    <property type="evidence" value="ECO:0000270"/>
    <property type="project" value="RGD"/>
</dbReference>
<dbReference type="GO" id="GO:0006955">
    <property type="term" value="P:immune response"/>
    <property type="evidence" value="ECO:0000266"/>
    <property type="project" value="RGD"/>
</dbReference>
<dbReference type="GO" id="GO:0006954">
    <property type="term" value="P:inflammatory response"/>
    <property type="evidence" value="ECO:0000318"/>
    <property type="project" value="GO_Central"/>
</dbReference>
<dbReference type="GO" id="GO:0007254">
    <property type="term" value="P:JNK cascade"/>
    <property type="evidence" value="ECO:0000314"/>
    <property type="project" value="UniProtKB"/>
</dbReference>
<dbReference type="GO" id="GO:0060137">
    <property type="term" value="P:maternal process involved in parturition"/>
    <property type="evidence" value="ECO:0000270"/>
    <property type="project" value="RGD"/>
</dbReference>
<dbReference type="GO" id="GO:0001818">
    <property type="term" value="P:negative regulation of cytokine production"/>
    <property type="evidence" value="ECO:0000250"/>
    <property type="project" value="UniProtKB"/>
</dbReference>
<dbReference type="GO" id="GO:1904336">
    <property type="term" value="P:negative regulation of ductus arteriosus closure"/>
    <property type="evidence" value="ECO:0000315"/>
    <property type="project" value="RGD"/>
</dbReference>
<dbReference type="GO" id="GO:1904471">
    <property type="term" value="P:negative regulation of endothelin production"/>
    <property type="evidence" value="ECO:0000315"/>
    <property type="project" value="RGD"/>
</dbReference>
<dbReference type="GO" id="GO:2000420">
    <property type="term" value="P:negative regulation of eosinophil extravasation"/>
    <property type="evidence" value="ECO:0000250"/>
    <property type="project" value="UniProtKB"/>
</dbReference>
<dbReference type="GO" id="GO:0050728">
    <property type="term" value="P:negative regulation of inflammatory response"/>
    <property type="evidence" value="ECO:0000250"/>
    <property type="project" value="UniProtKB"/>
</dbReference>
<dbReference type="GO" id="GO:0033624">
    <property type="term" value="P:negative regulation of integrin activation"/>
    <property type="evidence" value="ECO:0000250"/>
    <property type="project" value="UniProtKB"/>
</dbReference>
<dbReference type="GO" id="GO:0032690">
    <property type="term" value="P:negative regulation of interleukin-1 alpha production"/>
    <property type="evidence" value="ECO:0000315"/>
    <property type="project" value="RGD"/>
</dbReference>
<dbReference type="GO" id="GO:0002792">
    <property type="term" value="P:negative regulation of peptide secretion"/>
    <property type="evidence" value="ECO:0000315"/>
    <property type="project" value="RGD"/>
</dbReference>
<dbReference type="GO" id="GO:1904348">
    <property type="term" value="P:negative regulation of small intestine smooth muscle contraction"/>
    <property type="evidence" value="ECO:0000314"/>
    <property type="project" value="RGD"/>
</dbReference>
<dbReference type="GO" id="GO:0032720">
    <property type="term" value="P:negative regulation of tumor necrosis factor production"/>
    <property type="evidence" value="ECO:0000315"/>
    <property type="project" value="RGD"/>
</dbReference>
<dbReference type="GO" id="GO:2000388">
    <property type="term" value="P:positive regulation of antral ovarian follicle growth"/>
    <property type="evidence" value="ECO:0000315"/>
    <property type="project" value="RGD"/>
</dbReference>
<dbReference type="GO" id="GO:0045780">
    <property type="term" value="P:positive regulation of bone resorption"/>
    <property type="evidence" value="ECO:0000315"/>
    <property type="project" value="RGD"/>
</dbReference>
<dbReference type="GO" id="GO:1904364">
    <property type="term" value="P:positive regulation of calcitonin secretion"/>
    <property type="evidence" value="ECO:0000315"/>
    <property type="project" value="RGD"/>
</dbReference>
<dbReference type="GO" id="GO:0045785">
    <property type="term" value="P:positive regulation of cell adhesion"/>
    <property type="evidence" value="ECO:0000315"/>
    <property type="project" value="RGD"/>
</dbReference>
<dbReference type="GO" id="GO:0008284">
    <property type="term" value="P:positive regulation of cell population proliferation"/>
    <property type="evidence" value="ECO:0000315"/>
    <property type="project" value="RGD"/>
</dbReference>
<dbReference type="GO" id="GO:1904367">
    <property type="term" value="P:positive regulation of chemokinesis"/>
    <property type="evidence" value="ECO:0000315"/>
    <property type="project" value="RGD"/>
</dbReference>
<dbReference type="GO" id="GO:0046010">
    <property type="term" value="P:positive regulation of circadian sleep/wake cycle, non-REM sleep"/>
    <property type="evidence" value="ECO:0000315"/>
    <property type="project" value="RGD"/>
</dbReference>
<dbReference type="GO" id="GO:0001819">
    <property type="term" value="P:positive regulation of cytokine production"/>
    <property type="evidence" value="ECO:0000250"/>
    <property type="project" value="UniProtKB"/>
</dbReference>
<dbReference type="GO" id="GO:0007204">
    <property type="term" value="P:positive regulation of cytosolic calcium ion concentration"/>
    <property type="evidence" value="ECO:0000318"/>
    <property type="project" value="GO_Central"/>
</dbReference>
<dbReference type="GO" id="GO:0010628">
    <property type="term" value="P:positive regulation of gene expression"/>
    <property type="evidence" value="ECO:0000315"/>
    <property type="project" value="RGD"/>
</dbReference>
<dbReference type="GO" id="GO:1900127">
    <property type="term" value="P:positive regulation of hyaluronan biosynthetic process"/>
    <property type="evidence" value="ECO:0000315"/>
    <property type="project" value="RGD"/>
</dbReference>
<dbReference type="GO" id="GO:0050729">
    <property type="term" value="P:positive regulation of inflammatory response"/>
    <property type="evidence" value="ECO:0000250"/>
    <property type="project" value="UniProtKB"/>
</dbReference>
<dbReference type="GO" id="GO:0032733">
    <property type="term" value="P:positive regulation of interleukin-10 production"/>
    <property type="evidence" value="ECO:0000315"/>
    <property type="project" value="RGD"/>
</dbReference>
<dbReference type="GO" id="GO:0032757">
    <property type="term" value="P:positive regulation of interleukin-8 production"/>
    <property type="evidence" value="ECO:0000315"/>
    <property type="project" value="RGD"/>
</dbReference>
<dbReference type="GO" id="GO:1904466">
    <property type="term" value="P:positive regulation of matrix metallopeptidase secretion"/>
    <property type="evidence" value="ECO:0000315"/>
    <property type="project" value="RGD"/>
</dbReference>
<dbReference type="GO" id="GO:0070257">
    <property type="term" value="P:positive regulation of mucus secretion"/>
    <property type="evidence" value="ECO:0000314"/>
    <property type="project" value="RGD"/>
</dbReference>
<dbReference type="GO" id="GO:2000391">
    <property type="term" value="P:positive regulation of neutrophil extravasation"/>
    <property type="evidence" value="ECO:0000315"/>
    <property type="project" value="RGD"/>
</dbReference>
<dbReference type="GO" id="GO:0045778">
    <property type="term" value="P:positive regulation of ossification"/>
    <property type="evidence" value="ECO:0000315"/>
    <property type="project" value="RGD"/>
</dbReference>
<dbReference type="GO" id="GO:0045669">
    <property type="term" value="P:positive regulation of osteoblast differentiation"/>
    <property type="evidence" value="ECO:0000315"/>
    <property type="project" value="RGD"/>
</dbReference>
<dbReference type="GO" id="GO:2000386">
    <property type="term" value="P:positive regulation of ovarian follicle development"/>
    <property type="evidence" value="ECO:0000315"/>
    <property type="project" value="RGD"/>
</dbReference>
<dbReference type="GO" id="GO:0050714">
    <property type="term" value="P:positive regulation of protein secretion"/>
    <property type="evidence" value="ECO:0000315"/>
    <property type="project" value="RGD"/>
</dbReference>
<dbReference type="GO" id="GO:0014911">
    <property type="term" value="P:positive regulation of smooth muscle cell migration"/>
    <property type="evidence" value="ECO:0000315"/>
    <property type="project" value="RGD"/>
</dbReference>
<dbReference type="GO" id="GO:1904460">
    <property type="term" value="P:positive regulation of substance P secretion"/>
    <property type="evidence" value="ECO:0000315"/>
    <property type="project" value="RGD"/>
</dbReference>
<dbReference type="GO" id="GO:1904496">
    <property type="term" value="P:positive regulation of substance P secretion, neurotransmission"/>
    <property type="evidence" value="ECO:0000315"/>
    <property type="project" value="RGD"/>
</dbReference>
<dbReference type="GO" id="GO:0035810">
    <property type="term" value="P:positive regulation of urine volume"/>
    <property type="evidence" value="ECO:0000315"/>
    <property type="project" value="RGD"/>
</dbReference>
<dbReference type="GO" id="GO:0090303">
    <property type="term" value="P:positive regulation of wound healing"/>
    <property type="evidence" value="ECO:0000315"/>
    <property type="project" value="RGD"/>
</dbReference>
<dbReference type="GO" id="GO:0010840">
    <property type="term" value="P:regulation of circadian sleep/wake cycle, wakefulness"/>
    <property type="evidence" value="ECO:0000315"/>
    <property type="project" value="RGD"/>
</dbReference>
<dbReference type="GO" id="GO:0030278">
    <property type="term" value="P:regulation of ossification"/>
    <property type="evidence" value="ECO:0000266"/>
    <property type="project" value="RGD"/>
</dbReference>
<dbReference type="GO" id="GO:0051492">
    <property type="term" value="P:regulation of stress fiber assembly"/>
    <property type="evidence" value="ECO:0000250"/>
    <property type="project" value="UniProtKB"/>
</dbReference>
<dbReference type="GO" id="GO:0043200">
    <property type="term" value="P:response to amino acid"/>
    <property type="evidence" value="ECO:0000270"/>
    <property type="project" value="RGD"/>
</dbReference>
<dbReference type="GO" id="GO:0070555">
    <property type="term" value="P:response to interleukin-1"/>
    <property type="evidence" value="ECO:0000270"/>
    <property type="project" value="RGD"/>
</dbReference>
<dbReference type="GO" id="GO:0032496">
    <property type="term" value="P:response to lipopolysaccharide"/>
    <property type="evidence" value="ECO:0000266"/>
    <property type="project" value="RGD"/>
</dbReference>
<dbReference type="GO" id="GO:0009612">
    <property type="term" value="P:response to mechanical stimulus"/>
    <property type="evidence" value="ECO:0000266"/>
    <property type="project" value="RGD"/>
</dbReference>
<dbReference type="GO" id="GO:0009624">
    <property type="term" value="P:response to nematode"/>
    <property type="evidence" value="ECO:0000266"/>
    <property type="project" value="RGD"/>
</dbReference>
<dbReference type="GO" id="GO:0032570">
    <property type="term" value="P:response to progesterone"/>
    <property type="evidence" value="ECO:0000270"/>
    <property type="project" value="RGD"/>
</dbReference>
<dbReference type="GO" id="GO:0034695">
    <property type="term" value="P:response to prostaglandin E"/>
    <property type="evidence" value="ECO:0000270"/>
    <property type="project" value="RGD"/>
</dbReference>
<dbReference type="GO" id="GO:1902074">
    <property type="term" value="P:response to salt"/>
    <property type="evidence" value="ECO:0000270"/>
    <property type="project" value="RGD"/>
</dbReference>
<dbReference type="GO" id="GO:1990785">
    <property type="term" value="P:response to water-immersion restraint stress"/>
    <property type="evidence" value="ECO:0000270"/>
    <property type="project" value="RGD"/>
</dbReference>
<dbReference type="GO" id="GO:0009410">
    <property type="term" value="P:response to xenobiotic stimulus"/>
    <property type="evidence" value="ECO:0000270"/>
    <property type="project" value="RGD"/>
</dbReference>
<dbReference type="GO" id="GO:0042093">
    <property type="term" value="P:T-helper cell differentiation"/>
    <property type="evidence" value="ECO:0000250"/>
    <property type="project" value="UniProtKB"/>
</dbReference>
<dbReference type="CDD" id="cd15142">
    <property type="entry name" value="7tmA_PGE2_EP4"/>
    <property type="match status" value="1"/>
</dbReference>
<dbReference type="FunFam" id="1.20.1070.10:FF:000101">
    <property type="entry name" value="Prostaglandin E2 receptor EP4 subtype"/>
    <property type="match status" value="1"/>
</dbReference>
<dbReference type="Gene3D" id="1.20.1070.10">
    <property type="entry name" value="Rhodopsin 7-helix transmembrane proteins"/>
    <property type="match status" value="1"/>
</dbReference>
<dbReference type="InterPro" id="IPR000276">
    <property type="entry name" value="GPCR_Rhodpsn"/>
</dbReference>
<dbReference type="InterPro" id="IPR017452">
    <property type="entry name" value="GPCR_Rhodpsn_7TM"/>
</dbReference>
<dbReference type="InterPro" id="IPR001758">
    <property type="entry name" value="Prost_EP4_rcpt"/>
</dbReference>
<dbReference type="InterPro" id="IPR008365">
    <property type="entry name" value="Prostanoid_rcpt"/>
</dbReference>
<dbReference type="InterPro" id="IPR001244">
    <property type="entry name" value="Prostglndn_DP_rcpt"/>
</dbReference>
<dbReference type="PANTHER" id="PTHR11866">
    <property type="entry name" value="G-PROTEIN COUPLED RECEPTOR FAMILY 1 MEMBER"/>
    <property type="match status" value="1"/>
</dbReference>
<dbReference type="PANTHER" id="PTHR11866:SF6">
    <property type="entry name" value="PROSTAGLANDIN E2 RECEPTOR EP4 SUBTYPE"/>
    <property type="match status" value="1"/>
</dbReference>
<dbReference type="Pfam" id="PF00001">
    <property type="entry name" value="7tm_1"/>
    <property type="match status" value="1"/>
</dbReference>
<dbReference type="PRINTS" id="PR00237">
    <property type="entry name" value="GPCRRHODOPSN"/>
</dbReference>
<dbReference type="PRINTS" id="PR00428">
    <property type="entry name" value="PROSTAGLNDNR"/>
</dbReference>
<dbReference type="PRINTS" id="PR01788">
    <property type="entry name" value="PROSTANOIDR"/>
</dbReference>
<dbReference type="PRINTS" id="PR00586">
    <property type="entry name" value="PRSTNOIDEP4R"/>
</dbReference>
<dbReference type="SUPFAM" id="SSF81321">
    <property type="entry name" value="Family A G protein-coupled receptor-like"/>
    <property type="match status" value="1"/>
</dbReference>
<dbReference type="PROSITE" id="PS00237">
    <property type="entry name" value="G_PROTEIN_RECEP_F1_1"/>
    <property type="match status" value="1"/>
</dbReference>
<dbReference type="PROSITE" id="PS50262">
    <property type="entry name" value="G_PROTEIN_RECEP_F1_2"/>
    <property type="match status" value="1"/>
</dbReference>
<feature type="chain" id="PRO_0000070068" description="Prostaglandin E2 receptor EP4 subtype">
    <location>
        <begin position="1"/>
        <end position="488"/>
    </location>
</feature>
<feature type="topological domain" description="Extracellular" evidence="3">
    <location>
        <begin position="1"/>
        <end position="19"/>
    </location>
</feature>
<feature type="transmembrane region" description="Helical; Name=1" evidence="3">
    <location>
        <begin position="20"/>
        <end position="43"/>
    </location>
</feature>
<feature type="topological domain" description="Cytoplasmic" evidence="3">
    <location>
        <begin position="44"/>
        <end position="55"/>
    </location>
</feature>
<feature type="transmembrane region" description="Helical; Name=2" evidence="3">
    <location>
        <begin position="56"/>
        <end position="79"/>
    </location>
</feature>
<feature type="topological domain" description="Extracellular" evidence="3">
    <location>
        <begin position="80"/>
        <end position="96"/>
    </location>
</feature>
<feature type="transmembrane region" description="Helical; Name=3" evidence="3">
    <location>
        <begin position="97"/>
        <end position="115"/>
    </location>
</feature>
<feature type="topological domain" description="Cytoplasmic" evidence="3">
    <location>
        <begin position="116"/>
        <end position="135"/>
    </location>
</feature>
<feature type="transmembrane region" description="Helical; Name=4" evidence="3">
    <location>
        <begin position="136"/>
        <end position="160"/>
    </location>
</feature>
<feature type="topological domain" description="Extracellular" evidence="3">
    <location>
        <begin position="161"/>
        <end position="184"/>
    </location>
</feature>
<feature type="transmembrane region" description="Helical; Name=5" evidence="3">
    <location>
        <begin position="185"/>
        <end position="211"/>
    </location>
</feature>
<feature type="topological domain" description="Cytoplasmic" evidence="3">
    <location>
        <begin position="212"/>
        <end position="270"/>
    </location>
</feature>
<feature type="transmembrane region" description="Helical; Name=6" evidence="3">
    <location>
        <begin position="271"/>
        <end position="298"/>
    </location>
</feature>
<feature type="topological domain" description="Extracellular" evidence="3">
    <location>
        <begin position="299"/>
        <end position="315"/>
    </location>
</feature>
<feature type="transmembrane region" description="Helical; Name=7" evidence="3">
    <location>
        <begin position="316"/>
        <end position="335"/>
    </location>
</feature>
<feature type="topological domain" description="Cytoplasmic" evidence="3">
    <location>
        <begin position="336"/>
        <end position="488"/>
    </location>
</feature>
<feature type="region of interest" description="Disordered" evidence="5">
    <location>
        <begin position="358"/>
        <end position="380"/>
    </location>
</feature>
<feature type="modified residue" description="Phosphoserine" evidence="2">
    <location>
        <position position="377"/>
    </location>
</feature>
<feature type="modified residue" description="Phosphoserine" evidence="2">
    <location>
        <position position="380"/>
    </location>
</feature>
<feature type="modified residue" description="Phosphoserine" evidence="2">
    <location>
        <position position="382"/>
    </location>
</feature>
<feature type="modified residue" description="Phosphoserine" evidence="2">
    <location>
        <position position="385"/>
    </location>
</feature>
<feature type="glycosylation site" description="N-linked (GlcNAc...) asparagine" evidence="3">
    <location>
        <position position="7"/>
    </location>
</feature>
<feature type="disulfide bond" evidence="4">
    <location>
        <begin position="92"/>
        <end position="170"/>
    </location>
</feature>
<feature type="sequence conflict" description="In Ref. 2; AAB53326." evidence="6" ref="2">
    <original>L</original>
    <variation>H</variation>
    <location>
        <position position="214"/>
    </location>
</feature>
<feature type="sequence conflict" description="In Ref. 2; AAB53326." evidence="6" ref="2">
    <original>H</original>
    <variation>Q</variation>
    <location>
        <position position="396"/>
    </location>
</feature>
<gene>
    <name type="primary">Ptger4</name>
</gene>
<name>PE2R4_RAT</name>
<organism>
    <name type="scientific">Rattus norvegicus</name>
    <name type="common">Rat</name>
    <dbReference type="NCBI Taxonomy" id="10116"/>
    <lineage>
        <taxon>Eukaryota</taxon>
        <taxon>Metazoa</taxon>
        <taxon>Chordata</taxon>
        <taxon>Craniata</taxon>
        <taxon>Vertebrata</taxon>
        <taxon>Euteleostomi</taxon>
        <taxon>Mammalia</taxon>
        <taxon>Eutheria</taxon>
        <taxon>Euarchontoglires</taxon>
        <taxon>Glires</taxon>
        <taxon>Rodentia</taxon>
        <taxon>Myomorpha</taxon>
        <taxon>Muroidea</taxon>
        <taxon>Muridae</taxon>
        <taxon>Murinae</taxon>
        <taxon>Rattus</taxon>
    </lineage>
</organism>
<sequence length="488" mass="53366">MSIPGVNASFSSTPERLNSPVTIPAVMFIFGVVGNLVAIVVLCKSRKEQKETTFYTLVCGLAVTDLLGTLLVSPVTIATYMKGQWPGDQALCDYSTFILLFFGLSGLSIICAMSIERYLAINHAYFYSHYVDKRLAGLTLFAVYASNVLFCALPNMGLGRSERQYPGTWCFIDWTTNVTAYAAFSYMYAGFSSFLILATVLCNVLVCGALLRMLRQFMRRTSLGTEQHHAAAAAAVASVACRGHAAASPALQRLSDFRRRRSFRRIAGAEIQMVILLIATSLVVLICSIPLVVRVFINQLYQPSVVKDISRNPDLQAIRIASVNPILDPWIYILLRKTVLSKAIEKIKCLFCRIGGSGRDGSAQHCSESRRTSSAMSGHSRSFLSRELREISSTSHTLLYLPDLTESSLGGKNLLPGTHGMGLTQADTTSLRTLRISETSDSSQGQDSESVLLVDEVSGSQREEPASKGNSLQVTFPSETLKLSEKCI</sequence>
<reference key="1">
    <citation type="journal article" date="1994" name="Biochem. Biophys. Res. Commun.">
        <title>Molecular cloning and expression of rat prostaglandin E receptor EP2 subtype.</title>
        <authorList>
            <person name="Sando T."/>
            <person name="Usui T."/>
            <person name="Tanaka I."/>
            <person name="Mori K."/>
            <person name="Sasaki Y."/>
            <person name="Fukuda Y."/>
            <person name="Namba T."/>
            <person name="Sugimoto Y."/>
            <person name="Ichikawa A."/>
            <person name="Narumiya S."/>
            <person name="Nakao K."/>
        </authorList>
    </citation>
    <scope>NUCLEOTIDE SEQUENCE [MRNA]</scope>
    <source>
        <tissue>Lung</tissue>
    </source>
</reference>
<reference key="2">
    <citation type="journal article" date="1997" name="Eur. J. Pharmacol.">
        <title>Molecular cloning and characterization of the four rat prostaglandin E2 prostanoid receptor subtypes.</title>
        <authorList>
            <person name="Boie Y."/>
            <person name="Stocco R."/>
            <person name="Sawyer N."/>
            <person name="Slipetz D.M."/>
            <person name="Ungrin M.D."/>
            <person name="Neuschafer-Rube F."/>
            <person name="Puschel G.P."/>
            <person name="Metters K.M."/>
            <person name="Abramovitz M."/>
        </authorList>
    </citation>
    <scope>NUCLEOTIDE SEQUENCE [MRNA]</scope>
    <source>
        <strain>Sprague-Dawley</strain>
        <tissue>Kidney</tissue>
    </source>
</reference>
<proteinExistence type="evidence at transcript level"/>